<protein>
    <recommendedName>
        <fullName>Ribonucleoside-diphosphate reductase 2 subunit alpha</fullName>
        <ecNumber>1.17.4.1</ecNumber>
    </recommendedName>
    <alternativeName>
        <fullName>R1E protein</fullName>
    </alternativeName>
    <alternativeName>
        <fullName>Ribonucleotide reductase 2</fullName>
    </alternativeName>
</protein>
<proteinExistence type="evidence at protein level"/>
<organism>
    <name type="scientific">Salmonella typhimurium (strain LT2 / SGSC1412 / ATCC 700720)</name>
    <dbReference type="NCBI Taxonomy" id="99287"/>
    <lineage>
        <taxon>Bacteria</taxon>
        <taxon>Pseudomonadati</taxon>
        <taxon>Pseudomonadota</taxon>
        <taxon>Gammaproteobacteria</taxon>
        <taxon>Enterobacterales</taxon>
        <taxon>Enterobacteriaceae</taxon>
        <taxon>Salmonella</taxon>
    </lineage>
</organism>
<sequence length="714" mass="80587">MATTTPERVMQETMDYHALNAMLNLYDKAGHIQFDKDQQAIDAFFATHVRPHSVTFASQHERLGTLVREGYYDDAVLARYDRAFVLRLFEHAHASGFRFQTFLGAWKFYTSYTLKTFDGKRYLEHFEDRVTMVALTLAQGDETLATQLTDEMLSGRFQPATPTFLNCGKQQRGELVSCFLLRIEDNMESIGRAVNSALQLSKRGGGVAFLLSNLREAGAPIKRIENQSSGVIPVMKMLEDAFSYANQLGARQGAGAVYLHAHHPDILRFLDTKRENADEKIRIKTLSLGVVIPDITFRLAKENAQMALFSPYDIQRRYGKPFGDIAISERYDELIADPHVRKTYINARDFFQTLAEIQFESGYPYIMFEDTVNRANPIAGRINMSNLCSEILQVNSASRYDDNLDYTHIGHDISCNLGSLNIAHVMDSPDIGRTVETAIRGLTAVSDMSHIRSVPSIAAGNAASHAIGLGQMNLHGYLAREGIAYGSPEALDFTNLYFYTITWHAVHTSMRLARERGKTFAGFAQSRYASGDYFTQYLQDDWQPKTAKVRALFARSGITLPTREMWLKLRDDVMRYGIYNQNLQAVPPTGSISYINHATSSIHPIVAKIEIRKEGKTGRVYYPAPFMTNENLDMYQDAYDIGPEKIIDTYAEATRHVDQGLSLTLFFPDTATTRDINKAQIYAWRKGIKSLYYIRLRQLALEGTEIEGCVSCAL</sequence>
<name>RIR3_SALTY</name>
<dbReference type="EC" id="1.17.4.1"/>
<dbReference type="EMBL" id="X73226">
    <property type="protein sequence ID" value="CAA51699.1"/>
    <property type="molecule type" value="Genomic_DNA"/>
</dbReference>
<dbReference type="EMBL" id="AE006468">
    <property type="protein sequence ID" value="AAL21692.1"/>
    <property type="molecule type" value="Genomic_DNA"/>
</dbReference>
<dbReference type="PIR" id="S34271">
    <property type="entry name" value="S34271"/>
</dbReference>
<dbReference type="RefSeq" id="NP_461733.1">
    <property type="nucleotide sequence ID" value="NC_003197.2"/>
</dbReference>
<dbReference type="RefSeq" id="WP_000246626.1">
    <property type="nucleotide sequence ID" value="NC_003197.2"/>
</dbReference>
<dbReference type="PDB" id="1PEM">
    <property type="method" value="X-ray"/>
    <property type="resolution" value="2.99 A"/>
    <property type="chains" value="A=1-714"/>
</dbReference>
<dbReference type="PDB" id="1PEO">
    <property type="method" value="X-ray"/>
    <property type="resolution" value="3.00 A"/>
    <property type="chains" value="A=1-714"/>
</dbReference>
<dbReference type="PDB" id="1PEQ">
    <property type="method" value="X-ray"/>
    <property type="resolution" value="2.80 A"/>
    <property type="chains" value="A=1-714"/>
</dbReference>
<dbReference type="PDB" id="1PEU">
    <property type="method" value="X-ray"/>
    <property type="resolution" value="3.20 A"/>
    <property type="chains" value="A=1-714"/>
</dbReference>
<dbReference type="PDB" id="2BQ1">
    <property type="method" value="X-ray"/>
    <property type="resolution" value="3.99 A"/>
    <property type="chains" value="E/F=2-714"/>
</dbReference>
<dbReference type="PDBsum" id="1PEM"/>
<dbReference type="PDBsum" id="1PEO"/>
<dbReference type="PDBsum" id="1PEQ"/>
<dbReference type="PDBsum" id="1PEU"/>
<dbReference type="PDBsum" id="2BQ1"/>
<dbReference type="SMR" id="Q08698"/>
<dbReference type="STRING" id="99287.STM2807"/>
<dbReference type="DrugBank" id="DB03258">
    <property type="generic name" value="2'-Deoxycytidine 5'-triphosphate"/>
</dbReference>
<dbReference type="DrugBank" id="DB03222">
    <property type="generic name" value="dATP"/>
</dbReference>
<dbReference type="DrugBank" id="DB02452">
    <property type="generic name" value="Thymidine 5'-triphosphate"/>
</dbReference>
<dbReference type="PaxDb" id="99287-STM2807"/>
<dbReference type="GeneID" id="1254330"/>
<dbReference type="KEGG" id="stm:STM2807"/>
<dbReference type="PATRIC" id="fig|99287.12.peg.2965"/>
<dbReference type="HOGENOM" id="CLU_000404_4_1_6"/>
<dbReference type="OMA" id="TLFMTDK"/>
<dbReference type="PhylomeDB" id="Q08698"/>
<dbReference type="BioCyc" id="MetaCyc:MONOMER-13835"/>
<dbReference type="BioCyc" id="SENT99287:STM2807-MONOMER"/>
<dbReference type="EvolutionaryTrace" id="Q08698"/>
<dbReference type="Proteomes" id="UP000001014">
    <property type="component" value="Chromosome"/>
</dbReference>
<dbReference type="GO" id="GO:0005971">
    <property type="term" value="C:ribonucleoside-diphosphate reductase complex"/>
    <property type="evidence" value="ECO:0000318"/>
    <property type="project" value="GO_Central"/>
</dbReference>
<dbReference type="GO" id="GO:0005524">
    <property type="term" value="F:ATP binding"/>
    <property type="evidence" value="ECO:0000318"/>
    <property type="project" value="GO_Central"/>
</dbReference>
<dbReference type="GO" id="GO:0004748">
    <property type="term" value="F:ribonucleoside-diphosphate reductase activity, thioredoxin disulfide as acceptor"/>
    <property type="evidence" value="ECO:0000318"/>
    <property type="project" value="GO_Central"/>
</dbReference>
<dbReference type="GO" id="GO:0009263">
    <property type="term" value="P:deoxyribonucleotide biosynthetic process"/>
    <property type="evidence" value="ECO:0000318"/>
    <property type="project" value="GO_Central"/>
</dbReference>
<dbReference type="CDD" id="cd01679">
    <property type="entry name" value="RNR_I"/>
    <property type="match status" value="1"/>
</dbReference>
<dbReference type="FunFam" id="1.10.1650.20:FF:000002">
    <property type="entry name" value="Ribonucleoside-diphosphate reductase"/>
    <property type="match status" value="1"/>
</dbReference>
<dbReference type="Gene3D" id="1.10.1650.20">
    <property type="match status" value="1"/>
</dbReference>
<dbReference type="Gene3D" id="3.20.70.20">
    <property type="match status" value="1"/>
</dbReference>
<dbReference type="InterPro" id="IPR013346">
    <property type="entry name" value="NrdE_NrdA_C"/>
</dbReference>
<dbReference type="InterPro" id="IPR026459">
    <property type="entry name" value="RNR_1b_NrdE"/>
</dbReference>
<dbReference type="InterPro" id="IPR000788">
    <property type="entry name" value="RNR_lg_C"/>
</dbReference>
<dbReference type="InterPro" id="IPR013509">
    <property type="entry name" value="RNR_lsu_N"/>
</dbReference>
<dbReference type="InterPro" id="IPR013554">
    <property type="entry name" value="RNR_N"/>
</dbReference>
<dbReference type="InterPro" id="IPR008926">
    <property type="entry name" value="RNR_R1-su_N"/>
</dbReference>
<dbReference type="InterPro" id="IPR039718">
    <property type="entry name" value="Rrm1"/>
</dbReference>
<dbReference type="NCBIfam" id="TIGR02506">
    <property type="entry name" value="NrdE_NrdA"/>
    <property type="match status" value="1"/>
</dbReference>
<dbReference type="NCBIfam" id="TIGR04170">
    <property type="entry name" value="RNR_1b_NrdE"/>
    <property type="match status" value="1"/>
</dbReference>
<dbReference type="PANTHER" id="PTHR11573:SF30">
    <property type="entry name" value="RIBONUCLEOSIDE-DIPHOSPHATE REDUCTASE 2 SUBUNIT ALPHA"/>
    <property type="match status" value="1"/>
</dbReference>
<dbReference type="PANTHER" id="PTHR11573">
    <property type="entry name" value="RIBONUCLEOSIDE-DIPHOSPHATE REDUCTASE LARGE CHAIN"/>
    <property type="match status" value="1"/>
</dbReference>
<dbReference type="Pfam" id="PF02867">
    <property type="entry name" value="Ribonuc_red_lgC"/>
    <property type="match status" value="1"/>
</dbReference>
<dbReference type="Pfam" id="PF00317">
    <property type="entry name" value="Ribonuc_red_lgN"/>
    <property type="match status" value="1"/>
</dbReference>
<dbReference type="Pfam" id="PF08343">
    <property type="entry name" value="RNR_N"/>
    <property type="match status" value="1"/>
</dbReference>
<dbReference type="PRINTS" id="PR01183">
    <property type="entry name" value="RIBORDTASEM1"/>
</dbReference>
<dbReference type="SUPFAM" id="SSF51998">
    <property type="entry name" value="PFL-like glycyl radical enzymes"/>
    <property type="match status" value="1"/>
</dbReference>
<dbReference type="SUPFAM" id="SSF48168">
    <property type="entry name" value="R1 subunit of ribonucleotide reductase, N-terminal domain"/>
    <property type="match status" value="1"/>
</dbReference>
<dbReference type="PROSITE" id="PS00089">
    <property type="entry name" value="RIBORED_LARGE"/>
    <property type="match status" value="1"/>
</dbReference>
<reference key="1">
    <citation type="journal article" date="1994" name="J. Bacteriol.">
        <title>Cloning and sequencing of the genes from Salmonella typhimurium encoding a new bacterial ribonucleotide reductase.</title>
        <authorList>
            <person name="Jordan A."/>
            <person name="Gibert I."/>
            <person name="Barbe J."/>
        </authorList>
    </citation>
    <scope>NUCLEOTIDE SEQUENCE [GENOMIC DNA]</scope>
    <scope>PROTEIN SEQUENCE OF 2-15</scope>
    <source>
        <strain>LT2</strain>
    </source>
</reference>
<reference key="2">
    <citation type="journal article" date="2001" name="Nature">
        <title>Complete genome sequence of Salmonella enterica serovar Typhimurium LT2.</title>
        <authorList>
            <person name="McClelland M."/>
            <person name="Sanderson K.E."/>
            <person name="Spieth J."/>
            <person name="Clifton S.W."/>
            <person name="Latreille P."/>
            <person name="Courtney L."/>
            <person name="Porwollik S."/>
            <person name="Ali J."/>
            <person name="Dante M."/>
            <person name="Du F."/>
            <person name="Hou S."/>
            <person name="Layman D."/>
            <person name="Leonard S."/>
            <person name="Nguyen C."/>
            <person name="Scott K."/>
            <person name="Holmes A."/>
            <person name="Grewal N."/>
            <person name="Mulvaney E."/>
            <person name="Ryan E."/>
            <person name="Sun H."/>
            <person name="Florea L."/>
            <person name="Miller W."/>
            <person name="Stoneking T."/>
            <person name="Nhan M."/>
            <person name="Waterston R."/>
            <person name="Wilson R.K."/>
        </authorList>
    </citation>
    <scope>NUCLEOTIDE SEQUENCE [LARGE SCALE GENOMIC DNA]</scope>
    <source>
        <strain>LT2 / SGSC1412 / ATCC 700720</strain>
    </source>
</reference>
<reference key="3">
    <citation type="journal article" date="2003" name="J. Mol. Biol.">
        <title>Structure of the large subunit of class Ib ribonucleotide reductase from Salmonella typhimurium and its complexes with allosteric effectors.</title>
        <authorList>
            <person name="Uppsten M."/>
            <person name="Farnegardh M."/>
            <person name="Jordan A."/>
            <person name="Eliasson R."/>
            <person name="Eklund H."/>
            <person name="Uhlin U."/>
        </authorList>
    </citation>
    <scope>X-RAY CRYSTALLOGRAPHY (2.8 ANGSTROMS) IN COMPLEXES WITH ALLOSTERIC EFFECTORS</scope>
</reference>
<reference key="4">
    <citation type="journal article" date="2006" name="J. Mol. Biol.">
        <title>The first holocomplex structure of ribonucleotide reductase gives new insight into its mechanism of action.</title>
        <authorList>
            <person name="Uppsten M."/>
            <person name="Farnegardh M."/>
            <person name="Domkin V."/>
            <person name="Uhlin U."/>
        </authorList>
    </citation>
    <scope>X-RAY CRYSTALLOGRAPHY (4.0 ANGSTROMS) OF 2-713</scope>
</reference>
<feature type="initiator methionine" description="Removed" evidence="2">
    <location>
        <position position="1"/>
    </location>
</feature>
<feature type="chain" id="PRO_0000187225" description="Ribonucleoside-diphosphate reductase 2 subunit alpha">
    <location>
        <begin position="2"/>
        <end position="714"/>
    </location>
</feature>
<feature type="active site" description="Proton acceptor" evidence="1">
    <location>
        <position position="386"/>
    </location>
</feature>
<feature type="active site" description="Cysteine radical intermediate" evidence="1">
    <location>
        <position position="388"/>
    </location>
</feature>
<feature type="active site" description="Proton acceptor" evidence="1">
    <location>
        <position position="390"/>
    </location>
</feature>
<feature type="binding site" evidence="1">
    <location>
        <position position="161"/>
    </location>
    <ligand>
        <name>substrate</name>
    </ligand>
</feature>
<feature type="binding site" evidence="1">
    <location>
        <begin position="177"/>
        <end position="178"/>
    </location>
    <ligand>
        <name>substrate</name>
    </ligand>
</feature>
<feature type="binding site" evidence="1">
    <location>
        <position position="206"/>
    </location>
    <ligand>
        <name>substrate</name>
    </ligand>
</feature>
<feature type="binding site" evidence="1">
    <location>
        <begin position="386"/>
        <end position="390"/>
    </location>
    <ligand>
        <name>substrate</name>
    </ligand>
</feature>
<feature type="binding site" evidence="1">
    <location>
        <begin position="588"/>
        <end position="592"/>
    </location>
    <ligand>
        <name>substrate</name>
    </ligand>
</feature>
<feature type="site" description="Important for hydrogen atom transfer" evidence="1">
    <location>
        <position position="178"/>
    </location>
</feature>
<feature type="site" description="Allosteric effector binding">
    <location>
        <position position="185"/>
    </location>
</feature>
<feature type="site" description="Allosteric effector binding">
    <location>
        <position position="215"/>
    </location>
</feature>
<feature type="site" description="Allosteric effector binding">
    <location>
        <position position="222"/>
    </location>
</feature>
<feature type="site" description="Important for hydrogen atom transfer" evidence="1">
    <location>
        <position position="415"/>
    </location>
</feature>
<feature type="site" description="Important for electron transfer" evidence="1">
    <location>
        <position position="692"/>
    </location>
</feature>
<feature type="site" description="Important for electron transfer" evidence="1">
    <location>
        <position position="693"/>
    </location>
</feature>
<feature type="site" description="Interacts with thioredoxin/glutaredoxin" evidence="1">
    <location>
        <position position="709"/>
    </location>
</feature>
<feature type="site" description="Interacts with thioredoxin/glutaredoxin" evidence="1">
    <location>
        <position position="712"/>
    </location>
</feature>
<feature type="disulfide bond" description="Redox-active">
    <location>
        <begin position="178"/>
        <end position="415"/>
    </location>
</feature>
<feature type="helix" evidence="6">
    <location>
        <begin position="16"/>
        <end position="21"/>
    </location>
</feature>
<feature type="helix" evidence="6">
    <location>
        <begin position="22"/>
        <end position="24"/>
    </location>
</feature>
<feature type="helix" evidence="6">
    <location>
        <begin position="35"/>
        <end position="47"/>
    </location>
</feature>
<feature type="helix" evidence="6">
    <location>
        <begin position="49"/>
        <end position="52"/>
    </location>
</feature>
<feature type="helix" evidence="6">
    <location>
        <begin position="59"/>
        <end position="68"/>
    </location>
</feature>
<feature type="helix" evidence="6">
    <location>
        <begin position="74"/>
        <end position="77"/>
    </location>
</feature>
<feature type="helix" evidence="6">
    <location>
        <begin position="82"/>
        <end position="94"/>
    </location>
</feature>
<feature type="helix" evidence="6">
    <location>
        <begin position="102"/>
        <end position="111"/>
    </location>
</feature>
<feature type="strand" evidence="6">
    <location>
        <begin position="119"/>
        <end position="122"/>
    </location>
</feature>
<feature type="helix" evidence="6">
    <location>
        <begin position="126"/>
        <end position="138"/>
    </location>
</feature>
<feature type="helix" evidence="6">
    <location>
        <begin position="142"/>
        <end position="153"/>
    </location>
</feature>
<feature type="strand" evidence="6">
    <location>
        <begin position="156"/>
        <end position="159"/>
    </location>
</feature>
<feature type="helix" evidence="6">
    <location>
        <begin position="161"/>
        <end position="166"/>
    </location>
</feature>
<feature type="strand" evidence="6">
    <location>
        <begin position="169"/>
        <end position="171"/>
    </location>
</feature>
<feature type="strand" evidence="6">
    <location>
        <begin position="179"/>
        <end position="181"/>
    </location>
</feature>
<feature type="helix" evidence="6">
    <location>
        <begin position="187"/>
        <end position="201"/>
    </location>
</feature>
<feature type="turn" evidence="6">
    <location>
        <begin position="202"/>
        <end position="204"/>
    </location>
</feature>
<feature type="strand" evidence="6">
    <location>
        <begin position="206"/>
        <end position="210"/>
    </location>
</feature>
<feature type="strand" evidence="6">
    <location>
        <begin position="224"/>
        <end position="226"/>
    </location>
</feature>
<feature type="helix" evidence="6">
    <location>
        <begin position="232"/>
        <end position="244"/>
    </location>
</feature>
<feature type="strand" evidence="6">
    <location>
        <begin position="254"/>
        <end position="260"/>
    </location>
</feature>
<feature type="helix" evidence="6">
    <location>
        <begin position="266"/>
        <end position="270"/>
    </location>
</feature>
<feature type="helix" evidence="6">
    <location>
        <begin position="271"/>
        <end position="273"/>
    </location>
</feature>
<feature type="strand" evidence="7">
    <location>
        <begin position="279"/>
        <end position="281"/>
    </location>
</feature>
<feature type="strand" evidence="6">
    <location>
        <begin position="287"/>
        <end position="291"/>
    </location>
</feature>
<feature type="helix" evidence="6">
    <location>
        <begin position="295"/>
        <end position="301"/>
    </location>
</feature>
<feature type="strand" evidence="6">
    <location>
        <begin position="305"/>
        <end position="309"/>
    </location>
</feature>
<feature type="helix" evidence="6">
    <location>
        <begin position="311"/>
        <end position="318"/>
    </location>
</feature>
<feature type="helix" evidence="6">
    <location>
        <begin position="322"/>
        <end position="324"/>
    </location>
</feature>
<feature type="helix" evidence="6">
    <location>
        <begin position="327"/>
        <end position="336"/>
    </location>
</feature>
<feature type="strand" evidence="6">
    <location>
        <begin position="342"/>
        <end position="346"/>
    </location>
</feature>
<feature type="helix" evidence="6">
    <location>
        <begin position="347"/>
        <end position="361"/>
    </location>
</feature>
<feature type="strand" evidence="6">
    <location>
        <begin position="365"/>
        <end position="367"/>
    </location>
</feature>
<feature type="helix" evidence="6">
    <location>
        <begin position="369"/>
        <end position="375"/>
    </location>
</feature>
<feature type="strand" evidence="6">
    <location>
        <begin position="378"/>
        <end position="380"/>
    </location>
</feature>
<feature type="strand" evidence="6">
    <location>
        <begin position="406"/>
        <end position="408"/>
    </location>
</feature>
<feature type="strand" evidence="6">
    <location>
        <begin position="416"/>
        <end position="421"/>
    </location>
</feature>
<feature type="helix" evidence="6">
    <location>
        <begin position="422"/>
        <end position="426"/>
    </location>
</feature>
<feature type="helix" evidence="6">
    <location>
        <begin position="431"/>
        <end position="447"/>
    </location>
</feature>
<feature type="helix" evidence="6">
    <location>
        <begin position="455"/>
        <end position="464"/>
    </location>
</feature>
<feature type="strand" evidence="6">
    <location>
        <begin position="467"/>
        <end position="472"/>
    </location>
</feature>
<feature type="helix" evidence="6">
    <location>
        <begin position="474"/>
        <end position="480"/>
    </location>
</feature>
<feature type="helix" evidence="6">
    <location>
        <begin position="488"/>
        <end position="516"/>
    </location>
</feature>
<feature type="helix" evidence="6">
    <location>
        <begin position="523"/>
        <end position="525"/>
    </location>
</feature>
<feature type="helix" evidence="6">
    <location>
        <begin position="527"/>
        <end position="530"/>
    </location>
</feature>
<feature type="helix" evidence="6">
    <location>
        <begin position="532"/>
        <end position="534"/>
    </location>
</feature>
<feature type="helix" evidence="6">
    <location>
        <begin position="535"/>
        <end position="538"/>
    </location>
</feature>
<feature type="helix" evidence="6">
    <location>
        <begin position="547"/>
        <end position="556"/>
    </location>
</feature>
<feature type="helix" evidence="6">
    <location>
        <begin position="563"/>
        <end position="576"/>
    </location>
</feature>
<feature type="helix" evidence="6">
    <location>
        <begin position="592"/>
        <end position="596"/>
    </location>
</feature>
<feature type="strand" evidence="6">
    <location>
        <begin position="600"/>
        <end position="603"/>
    </location>
</feature>
<feature type="strand" evidence="6">
    <location>
        <begin position="608"/>
        <end position="612"/>
    </location>
</feature>
<feature type="strand" evidence="5">
    <location>
        <begin position="615"/>
        <end position="618"/>
    </location>
</feature>
<feature type="strand" evidence="6">
    <location>
        <begin position="620"/>
        <end position="623"/>
    </location>
</feature>
<feature type="turn" evidence="4">
    <location>
        <begin position="629"/>
        <end position="631"/>
    </location>
</feature>
<feature type="helix" evidence="6">
    <location>
        <begin position="632"/>
        <end position="634"/>
    </location>
</feature>
<feature type="helix" evidence="6">
    <location>
        <begin position="638"/>
        <end position="641"/>
    </location>
</feature>
<feature type="helix" evidence="6">
    <location>
        <begin position="643"/>
        <end position="654"/>
    </location>
</feature>
<feature type="strand" evidence="6">
    <location>
        <begin position="665"/>
        <end position="667"/>
    </location>
</feature>
<feature type="helix" evidence="6">
    <location>
        <begin position="673"/>
        <end position="686"/>
    </location>
</feature>
<feature type="strand" evidence="6">
    <location>
        <begin position="694"/>
        <end position="696"/>
    </location>
</feature>
<keyword id="KW-0002">3D-structure</keyword>
<keyword id="KW-0021">Allosteric enzyme</keyword>
<keyword id="KW-0067">ATP-binding</keyword>
<keyword id="KW-0215">Deoxyribonucleotide synthesis</keyword>
<keyword id="KW-0903">Direct protein sequencing</keyword>
<keyword id="KW-1015">Disulfide bond</keyword>
<keyword id="KW-0547">Nucleotide-binding</keyword>
<keyword id="KW-0560">Oxidoreductase</keyword>
<keyword id="KW-1185">Reference proteome</keyword>
<comment type="function">
    <text>Provides the precursors necessary for DNA synthesis. Catalyzes the biosynthesis of deoxyribonucleotides from the corresponding ribonucleotides. R1E contains the binding sites for both substrates and allosteric effectors and carries out the actual reduction of the ribonucleotide.</text>
</comment>
<comment type="catalytic activity">
    <reaction>
        <text>a 2'-deoxyribonucleoside 5'-diphosphate + [thioredoxin]-disulfide + H2O = a ribonucleoside 5'-diphosphate + [thioredoxin]-dithiol</text>
        <dbReference type="Rhea" id="RHEA:23252"/>
        <dbReference type="Rhea" id="RHEA-COMP:10698"/>
        <dbReference type="Rhea" id="RHEA-COMP:10700"/>
        <dbReference type="ChEBI" id="CHEBI:15377"/>
        <dbReference type="ChEBI" id="CHEBI:29950"/>
        <dbReference type="ChEBI" id="CHEBI:50058"/>
        <dbReference type="ChEBI" id="CHEBI:57930"/>
        <dbReference type="ChEBI" id="CHEBI:73316"/>
        <dbReference type="EC" id="1.17.4.1"/>
    </reaction>
</comment>
<comment type="activity regulation">
    <text>Under complex allosteric control mediated by deoxynucleoside triphosphates and ATP binding. The type of nucleotide bound at the specificity site determines substrate preference. It seems probable that ATP makes the enzyme reduce CDP and UDP, dGTP favors ADP reduction and dTTP favors GDP reduction. Lacks the N-terminal activity site.</text>
</comment>
<comment type="subunit">
    <text evidence="1">Tetramer of two alpha and two beta subunits.</text>
</comment>
<comment type="similarity">
    <text evidence="3">Belongs to the ribonucleoside diphosphate reductase large chain family.</text>
</comment>
<accession>Q08698</accession>
<gene>
    <name type="primary">nrdE</name>
    <name type="ordered locus">STM2807</name>
</gene>
<evidence type="ECO:0000250" key="1"/>
<evidence type="ECO:0000269" key="2">
    <source>
    </source>
</evidence>
<evidence type="ECO:0000305" key="3"/>
<evidence type="ECO:0007829" key="4">
    <source>
        <dbReference type="PDB" id="1PEM"/>
    </source>
</evidence>
<evidence type="ECO:0007829" key="5">
    <source>
        <dbReference type="PDB" id="1PEO"/>
    </source>
</evidence>
<evidence type="ECO:0007829" key="6">
    <source>
        <dbReference type="PDB" id="1PEQ"/>
    </source>
</evidence>
<evidence type="ECO:0007829" key="7">
    <source>
        <dbReference type="PDB" id="1PEU"/>
    </source>
</evidence>